<accession>B7IT29</accession>
<sequence length="122" mass="13120">MIQQESRLKVADNSGARELLTIKVLGGSGRKYANIGDIIVATVKQATPGGVVKKGDVVKAVVVRTKSGARRPDGSYIKFDENAAVIIKDDKSPRGTRIFGPVARELRDSNFMKIVSLAPEVL</sequence>
<evidence type="ECO:0000255" key="1">
    <source>
        <dbReference type="HAMAP-Rule" id="MF_01367"/>
    </source>
</evidence>
<evidence type="ECO:0000305" key="2"/>
<proteinExistence type="inferred from homology"/>
<keyword id="KW-0687">Ribonucleoprotein</keyword>
<keyword id="KW-0689">Ribosomal protein</keyword>
<keyword id="KW-0694">RNA-binding</keyword>
<keyword id="KW-0699">rRNA-binding</keyword>
<gene>
    <name evidence="1" type="primary">rplN</name>
    <name type="ordered locus">BCG9842_B5185</name>
</gene>
<name>RL14_BACC2</name>
<organism>
    <name type="scientific">Bacillus cereus (strain G9842)</name>
    <dbReference type="NCBI Taxonomy" id="405531"/>
    <lineage>
        <taxon>Bacteria</taxon>
        <taxon>Bacillati</taxon>
        <taxon>Bacillota</taxon>
        <taxon>Bacilli</taxon>
        <taxon>Bacillales</taxon>
        <taxon>Bacillaceae</taxon>
        <taxon>Bacillus</taxon>
        <taxon>Bacillus cereus group</taxon>
    </lineage>
</organism>
<comment type="function">
    <text evidence="1">Binds to 23S rRNA. Forms part of two intersubunit bridges in the 70S ribosome.</text>
</comment>
<comment type="subunit">
    <text evidence="1">Part of the 50S ribosomal subunit. Forms a cluster with proteins L3 and L19. In the 70S ribosome, L14 and L19 interact and together make contacts with the 16S rRNA in bridges B5 and B8.</text>
</comment>
<comment type="similarity">
    <text evidence="1">Belongs to the universal ribosomal protein uL14 family.</text>
</comment>
<reference key="1">
    <citation type="submission" date="2008-10" db="EMBL/GenBank/DDBJ databases">
        <title>Genome sequence of Bacillus cereus G9842.</title>
        <authorList>
            <person name="Dodson R.J."/>
            <person name="Durkin A.S."/>
            <person name="Rosovitz M.J."/>
            <person name="Rasko D.A."/>
            <person name="Hoffmaster A."/>
            <person name="Ravel J."/>
            <person name="Sutton G."/>
        </authorList>
    </citation>
    <scope>NUCLEOTIDE SEQUENCE [LARGE SCALE GENOMIC DNA]</scope>
    <source>
        <strain>G9842</strain>
    </source>
</reference>
<feature type="chain" id="PRO_1000144221" description="Large ribosomal subunit protein uL14">
    <location>
        <begin position="1"/>
        <end position="122"/>
    </location>
</feature>
<protein>
    <recommendedName>
        <fullName evidence="1">Large ribosomal subunit protein uL14</fullName>
    </recommendedName>
    <alternativeName>
        <fullName evidence="2">50S ribosomal protein L14</fullName>
    </alternativeName>
</protein>
<dbReference type="EMBL" id="CP001186">
    <property type="protein sequence ID" value="ACK95971.1"/>
    <property type="molecule type" value="Genomic_DNA"/>
</dbReference>
<dbReference type="RefSeq" id="WP_000615912.1">
    <property type="nucleotide sequence ID" value="NC_011772.1"/>
</dbReference>
<dbReference type="SMR" id="B7IT29"/>
<dbReference type="GeneID" id="93010933"/>
<dbReference type="KEGG" id="bcg:BCG9842_B5185"/>
<dbReference type="HOGENOM" id="CLU_095071_2_1_9"/>
<dbReference type="Proteomes" id="UP000006744">
    <property type="component" value="Chromosome"/>
</dbReference>
<dbReference type="GO" id="GO:0022625">
    <property type="term" value="C:cytosolic large ribosomal subunit"/>
    <property type="evidence" value="ECO:0007669"/>
    <property type="project" value="TreeGrafter"/>
</dbReference>
<dbReference type="GO" id="GO:0070180">
    <property type="term" value="F:large ribosomal subunit rRNA binding"/>
    <property type="evidence" value="ECO:0007669"/>
    <property type="project" value="TreeGrafter"/>
</dbReference>
<dbReference type="GO" id="GO:0003735">
    <property type="term" value="F:structural constituent of ribosome"/>
    <property type="evidence" value="ECO:0007669"/>
    <property type="project" value="InterPro"/>
</dbReference>
<dbReference type="GO" id="GO:0006412">
    <property type="term" value="P:translation"/>
    <property type="evidence" value="ECO:0007669"/>
    <property type="project" value="UniProtKB-UniRule"/>
</dbReference>
<dbReference type="CDD" id="cd00337">
    <property type="entry name" value="Ribosomal_uL14"/>
    <property type="match status" value="1"/>
</dbReference>
<dbReference type="FunFam" id="2.40.150.20:FF:000001">
    <property type="entry name" value="50S ribosomal protein L14"/>
    <property type="match status" value="1"/>
</dbReference>
<dbReference type="Gene3D" id="2.40.150.20">
    <property type="entry name" value="Ribosomal protein L14"/>
    <property type="match status" value="1"/>
</dbReference>
<dbReference type="HAMAP" id="MF_01367">
    <property type="entry name" value="Ribosomal_uL14"/>
    <property type="match status" value="1"/>
</dbReference>
<dbReference type="InterPro" id="IPR000218">
    <property type="entry name" value="Ribosomal_uL14"/>
</dbReference>
<dbReference type="InterPro" id="IPR005745">
    <property type="entry name" value="Ribosomal_uL14_bac-type"/>
</dbReference>
<dbReference type="InterPro" id="IPR019972">
    <property type="entry name" value="Ribosomal_uL14_CS"/>
</dbReference>
<dbReference type="InterPro" id="IPR036853">
    <property type="entry name" value="Ribosomal_uL14_sf"/>
</dbReference>
<dbReference type="NCBIfam" id="TIGR01067">
    <property type="entry name" value="rplN_bact"/>
    <property type="match status" value="1"/>
</dbReference>
<dbReference type="PANTHER" id="PTHR11761">
    <property type="entry name" value="50S/60S RIBOSOMAL PROTEIN L14/L23"/>
    <property type="match status" value="1"/>
</dbReference>
<dbReference type="PANTHER" id="PTHR11761:SF3">
    <property type="entry name" value="LARGE RIBOSOMAL SUBUNIT PROTEIN UL14M"/>
    <property type="match status" value="1"/>
</dbReference>
<dbReference type="Pfam" id="PF00238">
    <property type="entry name" value="Ribosomal_L14"/>
    <property type="match status" value="1"/>
</dbReference>
<dbReference type="SMART" id="SM01374">
    <property type="entry name" value="Ribosomal_L14"/>
    <property type="match status" value="1"/>
</dbReference>
<dbReference type="SUPFAM" id="SSF50193">
    <property type="entry name" value="Ribosomal protein L14"/>
    <property type="match status" value="1"/>
</dbReference>
<dbReference type="PROSITE" id="PS00049">
    <property type="entry name" value="RIBOSOMAL_L14"/>
    <property type="match status" value="1"/>
</dbReference>